<proteinExistence type="evidence at protein level"/>
<name>TVB65_HUMAN</name>
<keyword id="KW-0002">3D-structure</keyword>
<keyword id="KW-1064">Adaptive immunity</keyword>
<keyword id="KW-1003">Cell membrane</keyword>
<keyword id="KW-1015">Disulfide bond</keyword>
<keyword id="KW-0325">Glycoprotein</keyword>
<keyword id="KW-0391">Immunity</keyword>
<keyword id="KW-0393">Immunoglobulin domain</keyword>
<keyword id="KW-0472">Membrane</keyword>
<keyword id="KW-0675">Receptor</keyword>
<keyword id="KW-1185">Reference proteome</keyword>
<keyword id="KW-0732">Signal</keyword>
<keyword id="KW-1279">T cell receptor</keyword>
<accession>A0A0K0K1A5</accession>
<accession>A0A075B6M0</accession>
<accession>A0A0A6YYR1</accession>
<accession>A0A585</accession>
<protein>
    <recommendedName>
        <fullName evidence="12">T cell receptor beta variable 6-5</fullName>
    </recommendedName>
</protein>
<feature type="signal peptide" evidence="1">
    <location>
        <begin position="1"/>
        <end position="21"/>
    </location>
</feature>
<feature type="chain" id="PRO_5011354908" description="T cell receptor beta variable 6-5" evidence="1">
    <location>
        <begin position="22"/>
        <end position="114"/>
    </location>
</feature>
<feature type="domain" description="Ig-like" evidence="2">
    <location>
        <begin position="22"/>
        <end position="114" status="greater than"/>
    </location>
</feature>
<feature type="glycosylation site" description="N-linked (GlcNAc...) asparagine" evidence="1">
    <location>
        <position position="84"/>
    </location>
</feature>
<feature type="disulfide bond" evidence="3 4 5 6 14 15 16 17 18 19">
    <location>
        <begin position="42"/>
        <end position="110"/>
    </location>
</feature>
<feature type="non-terminal residue">
    <location>
        <position position="114"/>
    </location>
</feature>
<feature type="strand" evidence="20">
    <location>
        <begin position="23"/>
        <end position="26"/>
    </location>
</feature>
<feature type="strand" evidence="20">
    <location>
        <begin position="28"/>
        <end position="33"/>
    </location>
</feature>
<feature type="strand" evidence="20">
    <location>
        <begin position="38"/>
        <end position="46"/>
    </location>
</feature>
<feature type="strand" evidence="20">
    <location>
        <begin position="49"/>
        <end position="57"/>
    </location>
</feature>
<feature type="turn" evidence="20">
    <location>
        <begin position="58"/>
        <end position="60"/>
    </location>
</feature>
<feature type="strand" evidence="20">
    <location>
        <begin position="61"/>
        <end position="70"/>
    </location>
</feature>
<feature type="strand" evidence="20">
    <location>
        <begin position="73"/>
        <end position="76"/>
    </location>
</feature>
<feature type="strand" evidence="21">
    <location>
        <begin position="83"/>
        <end position="85"/>
    </location>
</feature>
<feature type="strand" evidence="20">
    <location>
        <begin position="88"/>
        <end position="92"/>
    </location>
</feature>
<feature type="strand" evidence="20">
    <location>
        <begin position="95"/>
        <end position="99"/>
    </location>
</feature>
<feature type="helix" evidence="20">
    <location>
        <begin position="102"/>
        <end position="104"/>
    </location>
</feature>
<feature type="strand" evidence="20">
    <location>
        <begin position="106"/>
        <end position="113"/>
    </location>
</feature>
<sequence>MSIGLLCCAALSLLWAGPVNAGVTQTPKFQVLKTGQSMTLQCAQDMNHEYMSWYRQDPGMGLRLIHYSVGAGITDQGEVPNGYNVSRSTTEDFPLRLLSAAPSQTSVYFCASSY</sequence>
<organism>
    <name type="scientific">Homo sapiens</name>
    <name type="common">Human</name>
    <dbReference type="NCBI Taxonomy" id="9606"/>
    <lineage>
        <taxon>Eukaryota</taxon>
        <taxon>Metazoa</taxon>
        <taxon>Chordata</taxon>
        <taxon>Craniata</taxon>
        <taxon>Vertebrata</taxon>
        <taxon>Euteleostomi</taxon>
        <taxon>Mammalia</taxon>
        <taxon>Eutheria</taxon>
        <taxon>Euarchontoglires</taxon>
        <taxon>Primates</taxon>
        <taxon>Haplorrhini</taxon>
        <taxon>Catarrhini</taxon>
        <taxon>Hominidae</taxon>
        <taxon>Homo</taxon>
    </lineage>
</organism>
<dbReference type="EMBL" id="AC244196">
    <property type="status" value="NOT_ANNOTATED_CDS"/>
    <property type="molecule type" value="Genomic_DNA"/>
</dbReference>
<dbReference type="PDB" id="1AO7">
    <property type="method" value="X-ray"/>
    <property type="resolution" value="2.60 A"/>
    <property type="chains" value="E=20-114"/>
</dbReference>
<dbReference type="PDB" id="1BD2">
    <property type="method" value="X-ray"/>
    <property type="resolution" value="2.50 A"/>
    <property type="chains" value="E=20-114"/>
</dbReference>
<dbReference type="PDB" id="2BNQ">
    <property type="method" value="X-ray"/>
    <property type="resolution" value="1.70 A"/>
    <property type="chains" value="E=22-114"/>
</dbReference>
<dbReference type="PDB" id="2BNR">
    <property type="method" value="X-ray"/>
    <property type="resolution" value="1.90 A"/>
    <property type="chains" value="E=22-114"/>
</dbReference>
<dbReference type="PDB" id="2BNU">
    <property type="method" value="X-ray"/>
    <property type="resolution" value="1.40 A"/>
    <property type="chains" value="B=22-114"/>
</dbReference>
<dbReference type="PDB" id="4WWK">
    <property type="method" value="X-ray"/>
    <property type="resolution" value="3.10 A"/>
    <property type="chains" value="B=19-113"/>
</dbReference>
<dbReference type="PDB" id="5MEN">
    <property type="method" value="X-ray"/>
    <property type="resolution" value="2.81 A"/>
    <property type="chains" value="E=21-114"/>
</dbReference>
<dbReference type="PDB" id="6JXR">
    <property type="method" value="EM"/>
    <property type="resolution" value="3.70 A"/>
    <property type="chains" value="n=23-112"/>
</dbReference>
<dbReference type="PDB" id="6Q3S">
    <property type="method" value="X-ray"/>
    <property type="resolution" value="2.50 A"/>
    <property type="chains" value="E=22-114"/>
</dbReference>
<dbReference type="PDB" id="7FJD">
    <property type="method" value="EM"/>
    <property type="resolution" value="3.20 A"/>
    <property type="chains" value="n=3-112"/>
</dbReference>
<dbReference type="PDB" id="7FJE">
    <property type="method" value="EM"/>
    <property type="resolution" value="3.00 A"/>
    <property type="chains" value="n=3-112"/>
</dbReference>
<dbReference type="PDB" id="7FJF">
    <property type="method" value="EM"/>
    <property type="resolution" value="3.10 A"/>
    <property type="chains" value="n=3-112"/>
</dbReference>
<dbReference type="PDB" id="8RLT">
    <property type="method" value="X-ray"/>
    <property type="resolution" value="2.25 A"/>
    <property type="chains" value="E/J=20-112"/>
</dbReference>
<dbReference type="PDB" id="8RLU">
    <property type="method" value="X-ray"/>
    <property type="resolution" value="2.35 A"/>
    <property type="chains" value="E/J=20-112"/>
</dbReference>
<dbReference type="PDB" id="8RLV">
    <property type="method" value="X-ray"/>
    <property type="resolution" value="2.61 A"/>
    <property type="chains" value="E/J=20-112"/>
</dbReference>
<dbReference type="PDB" id="8TW4">
    <property type="method" value="EM"/>
    <property type="resolution" value="3.30 A"/>
    <property type="chains" value="B=1-114"/>
</dbReference>
<dbReference type="PDB" id="8TW6">
    <property type="method" value="EM"/>
    <property type="resolution" value="3.10 A"/>
    <property type="chains" value="B=2-114"/>
</dbReference>
<dbReference type="PDBsum" id="1AO7"/>
<dbReference type="PDBsum" id="1BD2"/>
<dbReference type="PDBsum" id="2BNQ"/>
<dbReference type="PDBsum" id="2BNR"/>
<dbReference type="PDBsum" id="2BNU"/>
<dbReference type="PDBsum" id="4WWK"/>
<dbReference type="PDBsum" id="5MEN"/>
<dbReference type="PDBsum" id="6JXR"/>
<dbReference type="PDBsum" id="6Q3S"/>
<dbReference type="PDBsum" id="7FJD"/>
<dbReference type="PDBsum" id="7FJE"/>
<dbReference type="PDBsum" id="7FJF"/>
<dbReference type="PDBsum" id="8RLT"/>
<dbReference type="PDBsum" id="8RLU"/>
<dbReference type="PDBsum" id="8RLV"/>
<dbReference type="PDBsum" id="8TW4"/>
<dbReference type="PDBsum" id="8TW6"/>
<dbReference type="SMR" id="A0A0K0K1A5"/>
<dbReference type="FunCoup" id="A0A0K0K1A5">
    <property type="interactions" value="397"/>
</dbReference>
<dbReference type="IMGT_GENE-DB" id="TRBV6-5"/>
<dbReference type="GlyCosmos" id="A0A0K0K1A5">
    <property type="glycosylation" value="1 site, No reported glycans"/>
</dbReference>
<dbReference type="GlyGen" id="A0A0K0K1A5">
    <property type="glycosylation" value="1 site"/>
</dbReference>
<dbReference type="BioMuta" id="TRBV6-5"/>
<dbReference type="MassIVE" id="A0A0K0K1A5"/>
<dbReference type="Ensembl" id="ENST00000390368.2">
    <property type="protein sequence ID" value="ENSP00000374891.2"/>
    <property type="gene ID" value="ENSG00000211721.2"/>
</dbReference>
<dbReference type="Ensembl" id="ENST00000633072.1">
    <property type="protein sequence ID" value="ENSP00000488123.1"/>
    <property type="gene ID" value="ENSG00000277110.3"/>
</dbReference>
<dbReference type="UCSC" id="uc064isk.1">
    <property type="organism name" value="human"/>
</dbReference>
<dbReference type="AGR" id="HGNC:12230"/>
<dbReference type="GeneCards" id="TRBV6-5"/>
<dbReference type="HGNC" id="HGNC:12230">
    <property type="gene designation" value="TRBV6-5"/>
</dbReference>
<dbReference type="HPA" id="ENSG00000211721">
    <property type="expression patterns" value="Tissue enriched (lymphoid)"/>
</dbReference>
<dbReference type="neXtProt" id="NX_A0A0K0K1A5"/>
<dbReference type="VEuPathDB" id="HostDB:ENSG00000211721"/>
<dbReference type="GeneTree" id="ENSGT00940000154542"/>
<dbReference type="InParanoid" id="A0A0K0K1A5"/>
<dbReference type="OMA" id="MCNIAFP"/>
<dbReference type="OrthoDB" id="9803478at2759"/>
<dbReference type="PAN-GO" id="A0A0K0K1A5">
    <property type="GO annotations" value="2 GO annotations based on evolutionary models"/>
</dbReference>
<dbReference type="PathwayCommons" id="A0A0K0K1A5"/>
<dbReference type="ChiTaRS" id="TRBV6-5">
    <property type="organism name" value="human"/>
</dbReference>
<dbReference type="EvolutionaryTrace" id="A0A0K0K1A5"/>
<dbReference type="Pharos" id="A0A0K0K1A5">
    <property type="development level" value="Tdark"/>
</dbReference>
<dbReference type="PRO" id="PR:A0A0K0K1A5"/>
<dbReference type="Proteomes" id="UP000005640">
    <property type="component" value="Chromosome 7"/>
</dbReference>
<dbReference type="RNAct" id="A0A0K0K1A5">
    <property type="molecule type" value="protein"/>
</dbReference>
<dbReference type="Bgee" id="ENSG00000211721">
    <property type="expression patterns" value="Expressed in granulocyte and 84 other cell types or tissues"/>
</dbReference>
<dbReference type="GO" id="GO:0005886">
    <property type="term" value="C:plasma membrane"/>
    <property type="evidence" value="ECO:0000318"/>
    <property type="project" value="GO_Central"/>
</dbReference>
<dbReference type="GO" id="GO:0042101">
    <property type="term" value="C:T cell receptor complex"/>
    <property type="evidence" value="ECO:0007669"/>
    <property type="project" value="UniProtKB-KW"/>
</dbReference>
<dbReference type="GO" id="GO:0002250">
    <property type="term" value="P:adaptive immune response"/>
    <property type="evidence" value="ECO:0007669"/>
    <property type="project" value="UniProtKB-KW"/>
</dbReference>
<dbReference type="GO" id="GO:0007166">
    <property type="term" value="P:cell surface receptor signaling pathway"/>
    <property type="evidence" value="ECO:0000318"/>
    <property type="project" value="GO_Central"/>
</dbReference>
<dbReference type="Gene3D" id="2.60.40.10">
    <property type="entry name" value="Immunoglobulins"/>
    <property type="match status" value="1"/>
</dbReference>
<dbReference type="InterPro" id="IPR007110">
    <property type="entry name" value="Ig-like_dom"/>
</dbReference>
<dbReference type="InterPro" id="IPR036179">
    <property type="entry name" value="Ig-like_dom_sf"/>
</dbReference>
<dbReference type="InterPro" id="IPR013783">
    <property type="entry name" value="Ig-like_fold"/>
</dbReference>
<dbReference type="InterPro" id="IPR013106">
    <property type="entry name" value="Ig_V-set"/>
</dbReference>
<dbReference type="InterPro" id="IPR050413">
    <property type="entry name" value="TCR_beta_variable"/>
</dbReference>
<dbReference type="PANTHER" id="PTHR23268:SF19">
    <property type="entry name" value="T CELL RECEPTOR BETA VARIABLE 6-2-RELATED"/>
    <property type="match status" value="1"/>
</dbReference>
<dbReference type="PANTHER" id="PTHR23268">
    <property type="entry name" value="T-CELL RECEPTOR BETA CHAIN"/>
    <property type="match status" value="1"/>
</dbReference>
<dbReference type="Pfam" id="PF07686">
    <property type="entry name" value="V-set"/>
    <property type="match status" value="1"/>
</dbReference>
<dbReference type="SMART" id="SM00406">
    <property type="entry name" value="IGv"/>
    <property type="match status" value="1"/>
</dbReference>
<dbReference type="SUPFAM" id="SSF48726">
    <property type="entry name" value="Immunoglobulin"/>
    <property type="match status" value="1"/>
</dbReference>
<dbReference type="PROSITE" id="PS50835">
    <property type="entry name" value="IG_LIKE"/>
    <property type="match status" value="1"/>
</dbReference>
<evidence type="ECO:0000255" key="1"/>
<evidence type="ECO:0000255" key="2">
    <source>
        <dbReference type="PROSITE-ProRule" id="PRU00114"/>
    </source>
</evidence>
<evidence type="ECO:0000269" key="3">
    <source>
    </source>
</evidence>
<evidence type="ECO:0000269" key="4">
    <source>
    </source>
</evidence>
<evidence type="ECO:0000269" key="5">
    <source>
    </source>
</evidence>
<evidence type="ECO:0000269" key="6">
    <source>
    </source>
</evidence>
<evidence type="ECO:0000303" key="7">
    <source>
    </source>
</evidence>
<evidence type="ECO:0000303" key="8">
    <source>
    </source>
</evidence>
<evidence type="ECO:0000303" key="9">
    <source>
    </source>
</evidence>
<evidence type="ECO:0000303" key="10">
    <source>
    </source>
</evidence>
<evidence type="ECO:0000303" key="11">
    <source>
    </source>
</evidence>
<evidence type="ECO:0000303" key="12">
    <source ref="2"/>
</evidence>
<evidence type="ECO:0000305" key="13"/>
<evidence type="ECO:0007744" key="14">
    <source>
        <dbReference type="PDB" id="1AO7"/>
    </source>
</evidence>
<evidence type="ECO:0007744" key="15">
    <source>
        <dbReference type="PDB" id="1BD2"/>
    </source>
</evidence>
<evidence type="ECO:0007744" key="16">
    <source>
        <dbReference type="PDB" id="2BNQ"/>
    </source>
</evidence>
<evidence type="ECO:0007744" key="17">
    <source>
        <dbReference type="PDB" id="2BNR"/>
    </source>
</evidence>
<evidence type="ECO:0007744" key="18">
    <source>
        <dbReference type="PDB" id="2BNU"/>
    </source>
</evidence>
<evidence type="ECO:0007744" key="19">
    <source>
        <dbReference type="PDB" id="4WWK"/>
    </source>
</evidence>
<evidence type="ECO:0007829" key="20">
    <source>
        <dbReference type="PDB" id="2BNU"/>
    </source>
</evidence>
<evidence type="ECO:0007829" key="21">
    <source>
        <dbReference type="PDB" id="8RLT"/>
    </source>
</evidence>
<comment type="function">
    <text evidence="4 7 9 10 11">V region of the variable domain of T cell receptor (TR) beta chain that participates in the antigen recognition (PubMed:24600447). Alpha-beta T cell receptors are antigen specific receptors which are essential to the immune response and are present on the cell surface of T lymphocytes. Recognize peptide-major histocompatibility (MH) (pMH) complexes that are displayed by antigen presenting cells (APC), a prerequisite for efficient T cell adaptive immunity against pathogens (PubMed:25493333). Binding of alpha-beta TR to pMH complex initiates TR-CD3 clustering on the cell surface and intracellular activation of LCK that phosphorylates the ITAM motifs of CD3G, CD3D, CD3E and CD247 enabling the recruitment of ZAP70. In turn ZAP70 phosphorylates LAT, which recruits numerous signaling molecules to form the LAT signalosome. The LAT signalosome propagates signal branching to three major signaling pathways, the calcium, the mitogen-activated protein kinase (MAPK) kinase and the nuclear factor NF-kappa-B (NF-kB) pathways, leading to the mobilization of transcription factors that are critical for gene expression and essential for T cell growth and differentiation (PubMed:23524462). The T cell repertoire is generated in the thymus, by V-(D)-J rearrangement. This repertoire is then shaped by intrathymic selection events to generate a peripheral T cell pool of self-MH restricted, non-autoaggressive T cells. Post-thymic interaction of alpha-beta TR with the pMH complexes shapes TR structural and functional avidity (PubMed:15040585).</text>
</comment>
<comment type="subunit">
    <text evidence="4 8">Alpha-beta TR is a heterodimer composed of an alpha and beta chain; disulfide-linked (PubMed:26875526). The alpha-beta TR is associated with the transmembrane signaling CD3 coreceptor proteins to form the TR-CD3 (TcR or TCR). The assembly of alpha-beta TR heterodimers with CD3 occurs in the endoplasmic reticulum where a single alpha-beta TR heterodimer associates with one CD3D-CD3E heterodimer, one CD3G-CD3E heterodimer and one CD247 homodimer forming a stable octameric structure. CD3D-CD3E and CD3G-CD3E heterodimers preferentially associate with TR alpha and TR beta chains, respectively. The association of the CD247 homodimer is the last step of TcR assembly in the endoplasmic reticulum and is required for transport to the cell surface (PubMed:20452950).</text>
</comment>
<comment type="subcellular location">
    <subcellularLocation>
        <location evidence="8">Cell membrane</location>
    </subcellularLocation>
</comment>
<comment type="polymorphism">
    <text evidence="13">There are several alleles. The sequence shown is that of IMGT allele TRBV6-5*01.</text>
</comment>
<reference key="1">
    <citation type="journal article" date="2003" name="Nature">
        <title>The DNA sequence of human chromosome 7.</title>
        <authorList>
            <person name="Hillier L.W."/>
            <person name="Fulton R.S."/>
            <person name="Fulton L.A."/>
            <person name="Graves T.A."/>
            <person name="Pepin K.H."/>
            <person name="Wagner-McPherson C."/>
            <person name="Layman D."/>
            <person name="Maas J."/>
            <person name="Jaeger S."/>
            <person name="Walker R."/>
            <person name="Wylie K."/>
            <person name="Sekhon M."/>
            <person name="Becker M.C."/>
            <person name="O'Laughlin M.D."/>
            <person name="Schaller M.E."/>
            <person name="Fewell G.A."/>
            <person name="Delehaunty K.D."/>
            <person name="Miner T.L."/>
            <person name="Nash W.E."/>
            <person name="Cordes M."/>
            <person name="Du H."/>
            <person name="Sun H."/>
            <person name="Edwards J."/>
            <person name="Bradshaw-Cordum H."/>
            <person name="Ali J."/>
            <person name="Andrews S."/>
            <person name="Isak A."/>
            <person name="Vanbrunt A."/>
            <person name="Nguyen C."/>
            <person name="Du F."/>
            <person name="Lamar B."/>
            <person name="Courtney L."/>
            <person name="Kalicki J."/>
            <person name="Ozersky P."/>
            <person name="Bielicki L."/>
            <person name="Scott K."/>
            <person name="Holmes A."/>
            <person name="Harkins R."/>
            <person name="Harris A."/>
            <person name="Strong C.M."/>
            <person name="Hou S."/>
            <person name="Tomlinson C."/>
            <person name="Dauphin-Kohlberg S."/>
            <person name="Kozlowicz-Reilly A."/>
            <person name="Leonard S."/>
            <person name="Rohlfing T."/>
            <person name="Rock S.M."/>
            <person name="Tin-Wollam A.-M."/>
            <person name="Abbott A."/>
            <person name="Minx P."/>
            <person name="Maupin R."/>
            <person name="Strowmatt C."/>
            <person name="Latreille P."/>
            <person name="Miller N."/>
            <person name="Johnson D."/>
            <person name="Murray J."/>
            <person name="Woessner J.P."/>
            <person name="Wendl M.C."/>
            <person name="Yang S.-P."/>
            <person name="Schultz B.R."/>
            <person name="Wallis J.W."/>
            <person name="Spieth J."/>
            <person name="Bieri T.A."/>
            <person name="Nelson J.O."/>
            <person name="Berkowicz N."/>
            <person name="Wohldmann P.E."/>
            <person name="Cook L.L."/>
            <person name="Hickenbotham M.T."/>
            <person name="Eldred J."/>
            <person name="Williams D."/>
            <person name="Bedell J.A."/>
            <person name="Mardis E.R."/>
            <person name="Clifton S.W."/>
            <person name="Chissoe S.L."/>
            <person name="Marra M.A."/>
            <person name="Raymond C."/>
            <person name="Haugen E."/>
            <person name="Gillett W."/>
            <person name="Zhou Y."/>
            <person name="James R."/>
            <person name="Phelps K."/>
            <person name="Iadanoto S."/>
            <person name="Bubb K."/>
            <person name="Simms E."/>
            <person name="Levy R."/>
            <person name="Clendenning J."/>
            <person name="Kaul R."/>
            <person name="Kent W.J."/>
            <person name="Furey T.S."/>
            <person name="Baertsch R.A."/>
            <person name="Brent M.R."/>
            <person name="Keibler E."/>
            <person name="Flicek P."/>
            <person name="Bork P."/>
            <person name="Suyama M."/>
            <person name="Bailey J.A."/>
            <person name="Portnoy M.E."/>
            <person name="Torrents D."/>
            <person name="Chinwalla A.T."/>
            <person name="Gish W.R."/>
            <person name="Eddy S.R."/>
            <person name="McPherson J.D."/>
            <person name="Olson M.V."/>
            <person name="Eichler E.E."/>
            <person name="Green E.D."/>
            <person name="Waterston R.H."/>
            <person name="Wilson R.K."/>
        </authorList>
    </citation>
    <scope>NUCLEOTIDE SEQUENCE [LARGE SCALE GENOMIC DNA] (IMGT ALLELE TRBV6-5*01)</scope>
</reference>
<reference key="2">
    <citation type="book" date="2001" name="The T Cell Receptor FactsBook.">
        <title>The T Cell Receptor FactsBook.</title>
        <editorList>
            <person name="Lefranc M.P."/>
            <person name="Lefranc G."/>
        </editorList>
        <authorList>
            <person name="Lefranc M.P."/>
            <person name="Lefranc G."/>
        </authorList>
    </citation>
    <scope>NOMENCLATURE</scope>
</reference>
<reference key="3">
    <citation type="journal article" date="2004" name="Nat. Rev. Immunol.">
        <title>The many important facets of T-cell repertoire diversity.</title>
        <authorList>
            <person name="Nikolich-Zugich J."/>
            <person name="Slifka M.K."/>
            <person name="Messaoudi I."/>
        </authorList>
    </citation>
    <scope>REVIEW ON T CELL REPERTOIRE DIVERSITY</scope>
</reference>
<reference key="4">
    <citation type="journal article" date="2010" name="Cold Spring Harb. Perspect. Biol.">
        <title>Structural biology of the T-cell receptor: insights into receptor assembly, ligand recognition, and initiation of signaling.</title>
        <authorList>
            <person name="Wucherpfennig K.W."/>
            <person name="Gagnon E."/>
            <person name="Call M.J."/>
            <person name="Huseby E.S."/>
            <person name="Call M.E."/>
        </authorList>
    </citation>
    <scope>REVIEW ON T CELL RECEPTOR-CD3 COMPLEX ASSEMBLY</scope>
    <scope>SUBCELLULAR LOCATION</scope>
</reference>
<reference key="5">
    <citation type="journal article" date="2013" name="Nat. Rev. Immunol.">
        <title>T cell receptor signalling networks: branched, diversified and bounded.</title>
        <authorList>
            <person name="Brownlie R.J."/>
            <person name="Zamoyska R."/>
        </authorList>
    </citation>
    <scope>REVIEW ON T CELL RECEPTOR SIGNALING</scope>
</reference>
<reference key="6">
    <citation type="journal article" date="2014" name="Front. Immunol.">
        <title>Immunoglobulin and T Cell Receptor Genes: IMGT((R)) and the Birth and Rise of Immunoinformatics.</title>
        <authorList>
            <person name="Lefranc M.P."/>
        </authorList>
    </citation>
    <scope>NOMENCLATURE</scope>
</reference>
<reference key="7">
    <citation type="journal article" date="2015" name="Annu. Rev. Immunol.">
        <title>T cell antigen receptor recognition of antigen-presenting molecules.</title>
        <authorList>
            <person name="Rossjohn J."/>
            <person name="Gras S."/>
            <person name="Miles J.J."/>
            <person name="Turner S.J."/>
            <person name="Godfrey D.I."/>
            <person name="McCluskey J."/>
        </authorList>
    </citation>
    <scope>REVIEW ON FUNCTION</scope>
</reference>
<reference evidence="14" key="8">
    <citation type="journal article" date="1996" name="Nature">
        <title>Structure of the complex between human T-cell receptor, viral peptide and HLA-A2.</title>
        <authorList>
            <person name="Garboczi D.N."/>
            <person name="Ghosh P."/>
            <person name="Utz U."/>
            <person name="Fan Q.R."/>
            <person name="Biddison W.E."/>
            <person name="Wiley D.C."/>
        </authorList>
    </citation>
    <scope>X-RAY CRYSTALLOGRAPHY (2.60 ANGSTROMS) OF 20-114</scope>
    <scope>DISULFIDE BONDS</scope>
</reference>
<reference evidence="15" key="9">
    <citation type="journal article" date="1998" name="Immunity">
        <title>Two human T cell receptors bind in a similar diagonal mode to the HLA-A2/Tax peptide complex using different TCR amino acids.</title>
        <authorList>
            <person name="Ding Y.H."/>
            <person name="Smith K.J."/>
            <person name="Garboczi D.N."/>
            <person name="Utz U."/>
            <person name="Biddison W.E."/>
            <person name="Wiley D.C."/>
        </authorList>
    </citation>
    <scope>X-RAY CRYSTALLOGRAPHY (2.50 ANGSTROMS) OF 20-114</scope>
    <scope>DISULFIDE BONDS</scope>
</reference>
<reference evidence="16 17 18" key="10">
    <citation type="journal article" date="2005" name="J. Exp. Med.">
        <title>Structural and kinetic basis for heightened immunogenicity of T cell vaccines.</title>
        <authorList>
            <person name="Chen J.-L."/>
            <person name="Stewart-Jones G."/>
            <person name="Bossi G."/>
            <person name="Lissin N.M."/>
            <person name="Wooldridge L."/>
            <person name="Choi E.M.L."/>
            <person name="Held G."/>
            <person name="Dunbar P.R."/>
            <person name="Esnouf R.M."/>
            <person name="Sami M."/>
            <person name="Boulter J.M."/>
            <person name="Rizkallah P."/>
            <person name="Renner C."/>
            <person name="Sewell A."/>
            <person name="van der Merwe P.A."/>
            <person name="Jakobsen B.K."/>
            <person name="Griffiths G."/>
            <person name="Jones E.Y."/>
            <person name="Cerundolo V."/>
        </authorList>
    </citation>
    <scope>X-RAY CRYSTALLOGRAPHY (1.40 ANGSTROMS) OF 22-114</scope>
    <scope>DISULFIDE BONDS</scope>
</reference>
<reference evidence="19" key="11">
    <citation type="journal article" date="2016" name="Nat. Commun.">
        <title>Atypical natural killer T-cell receptor recognition of CD1d-lipid antigens.</title>
        <authorList>
            <person name="Le Nours J."/>
            <person name="Praveena T."/>
            <person name="Pellicci D.G."/>
            <person name="Gherardin N.A."/>
            <person name="Ross F.J."/>
            <person name="Lim R.T."/>
            <person name="Besra G.S."/>
            <person name="Keshipeddy S."/>
            <person name="Richardson S.K."/>
            <person name="Howell A.R."/>
            <person name="Gras S."/>
            <person name="Godfrey D.I."/>
            <person name="Rossjohn J."/>
            <person name="Uldrich A.P."/>
        </authorList>
    </citation>
    <scope>X-RAY CRYSTALLOGRAPHY (3.10 ANGSTROMS) OF 19-113 IN COMPLEX WITH ALPHA CHAIN AND CD1D</scope>
    <scope>DISULFIDE BONDS</scope>
    <scope>FUNCTION</scope>
</reference>
<gene>
    <name evidence="12" type="primary">TRBV6-5</name>
</gene>